<protein>
    <recommendedName>
        <fullName evidence="1">Tetraacyldisaccharide 4'-kinase</fullName>
        <ecNumber evidence="1">2.7.1.130</ecNumber>
    </recommendedName>
    <alternativeName>
        <fullName evidence="1">Lipid A 4'-kinase</fullName>
    </alternativeName>
</protein>
<gene>
    <name evidence="1" type="primary">lpxK</name>
    <name type="ordered locus">SBO_2203</name>
</gene>
<evidence type="ECO:0000255" key="1">
    <source>
        <dbReference type="HAMAP-Rule" id="MF_00409"/>
    </source>
</evidence>
<reference key="1">
    <citation type="journal article" date="2005" name="Nucleic Acids Res.">
        <title>Genome dynamics and diversity of Shigella species, the etiologic agents of bacillary dysentery.</title>
        <authorList>
            <person name="Yang F."/>
            <person name="Yang J."/>
            <person name="Zhang X."/>
            <person name="Chen L."/>
            <person name="Jiang Y."/>
            <person name="Yan Y."/>
            <person name="Tang X."/>
            <person name="Wang J."/>
            <person name="Xiong Z."/>
            <person name="Dong J."/>
            <person name="Xue Y."/>
            <person name="Zhu Y."/>
            <person name="Xu X."/>
            <person name="Sun L."/>
            <person name="Chen S."/>
            <person name="Nie H."/>
            <person name="Peng J."/>
            <person name="Xu J."/>
            <person name="Wang Y."/>
            <person name="Yuan Z."/>
            <person name="Wen Y."/>
            <person name="Yao Z."/>
            <person name="Shen Y."/>
            <person name="Qiang B."/>
            <person name="Hou Y."/>
            <person name="Yu J."/>
            <person name="Jin Q."/>
        </authorList>
    </citation>
    <scope>NUCLEOTIDE SEQUENCE [LARGE SCALE GENOMIC DNA]</scope>
    <source>
        <strain>Sb227</strain>
    </source>
</reference>
<name>LPXK_SHIBS</name>
<proteinExistence type="inferred from homology"/>
<comment type="function">
    <text evidence="1">Transfers the gamma-phosphate of ATP to the 4'-position of a tetraacyldisaccharide 1-phosphate intermediate (termed DS-1-P) to form tetraacyldisaccharide 1,4'-bis-phosphate (lipid IVA).</text>
</comment>
<comment type="catalytic activity">
    <reaction evidence="1">
        <text>a lipid A disaccharide + ATP = a lipid IVA + ADP + H(+)</text>
        <dbReference type="Rhea" id="RHEA:67840"/>
        <dbReference type="ChEBI" id="CHEBI:15378"/>
        <dbReference type="ChEBI" id="CHEBI:30616"/>
        <dbReference type="ChEBI" id="CHEBI:176343"/>
        <dbReference type="ChEBI" id="CHEBI:176425"/>
        <dbReference type="ChEBI" id="CHEBI:456216"/>
        <dbReference type="EC" id="2.7.1.130"/>
    </reaction>
</comment>
<comment type="pathway">
    <text evidence="1">Glycolipid biosynthesis; lipid IV(A) biosynthesis; lipid IV(A) from (3R)-3-hydroxytetradecanoyl-[acyl-carrier-protein] and UDP-N-acetyl-alpha-D-glucosamine: step 6/6.</text>
</comment>
<comment type="similarity">
    <text evidence="1">Belongs to the LpxK family.</text>
</comment>
<dbReference type="EC" id="2.7.1.130" evidence="1"/>
<dbReference type="EMBL" id="CP000036">
    <property type="protein sequence ID" value="ABB66773.1"/>
    <property type="molecule type" value="Genomic_DNA"/>
</dbReference>
<dbReference type="RefSeq" id="WP_000570561.1">
    <property type="nucleotide sequence ID" value="NC_007613.1"/>
</dbReference>
<dbReference type="SMR" id="Q31YT5"/>
<dbReference type="KEGG" id="sbo:SBO_2203"/>
<dbReference type="HOGENOM" id="CLU_038816_2_0_6"/>
<dbReference type="UniPathway" id="UPA00359">
    <property type="reaction ID" value="UER00482"/>
</dbReference>
<dbReference type="Proteomes" id="UP000007067">
    <property type="component" value="Chromosome"/>
</dbReference>
<dbReference type="GO" id="GO:0005886">
    <property type="term" value="C:plasma membrane"/>
    <property type="evidence" value="ECO:0007669"/>
    <property type="project" value="TreeGrafter"/>
</dbReference>
<dbReference type="GO" id="GO:0005524">
    <property type="term" value="F:ATP binding"/>
    <property type="evidence" value="ECO:0007669"/>
    <property type="project" value="UniProtKB-UniRule"/>
</dbReference>
<dbReference type="GO" id="GO:0009029">
    <property type="term" value="F:tetraacyldisaccharide 4'-kinase activity"/>
    <property type="evidence" value="ECO:0007669"/>
    <property type="project" value="UniProtKB-UniRule"/>
</dbReference>
<dbReference type="GO" id="GO:0009245">
    <property type="term" value="P:lipid A biosynthetic process"/>
    <property type="evidence" value="ECO:0007669"/>
    <property type="project" value="UniProtKB-UniRule"/>
</dbReference>
<dbReference type="GO" id="GO:0009244">
    <property type="term" value="P:lipopolysaccharide core region biosynthetic process"/>
    <property type="evidence" value="ECO:0007669"/>
    <property type="project" value="TreeGrafter"/>
</dbReference>
<dbReference type="HAMAP" id="MF_00409">
    <property type="entry name" value="LpxK"/>
    <property type="match status" value="1"/>
</dbReference>
<dbReference type="InterPro" id="IPR003758">
    <property type="entry name" value="LpxK"/>
</dbReference>
<dbReference type="InterPro" id="IPR027417">
    <property type="entry name" value="P-loop_NTPase"/>
</dbReference>
<dbReference type="NCBIfam" id="TIGR00682">
    <property type="entry name" value="lpxK"/>
    <property type="match status" value="1"/>
</dbReference>
<dbReference type="PANTHER" id="PTHR42724">
    <property type="entry name" value="TETRAACYLDISACCHARIDE 4'-KINASE"/>
    <property type="match status" value="1"/>
</dbReference>
<dbReference type="PANTHER" id="PTHR42724:SF1">
    <property type="entry name" value="TETRAACYLDISACCHARIDE 4'-KINASE, MITOCHONDRIAL-RELATED"/>
    <property type="match status" value="1"/>
</dbReference>
<dbReference type="Pfam" id="PF02606">
    <property type="entry name" value="LpxK"/>
    <property type="match status" value="1"/>
</dbReference>
<dbReference type="SUPFAM" id="SSF52540">
    <property type="entry name" value="P-loop containing nucleoside triphosphate hydrolases"/>
    <property type="match status" value="1"/>
</dbReference>
<feature type="chain" id="PRO_0000229980" description="Tetraacyldisaccharide 4'-kinase">
    <location>
        <begin position="1"/>
        <end position="328"/>
    </location>
</feature>
<feature type="binding site" evidence="1">
    <location>
        <begin position="55"/>
        <end position="62"/>
    </location>
    <ligand>
        <name>ATP</name>
        <dbReference type="ChEBI" id="CHEBI:30616"/>
    </ligand>
</feature>
<organism>
    <name type="scientific">Shigella boydii serotype 4 (strain Sb227)</name>
    <dbReference type="NCBI Taxonomy" id="300268"/>
    <lineage>
        <taxon>Bacteria</taxon>
        <taxon>Pseudomonadati</taxon>
        <taxon>Pseudomonadota</taxon>
        <taxon>Gammaproteobacteria</taxon>
        <taxon>Enterobacterales</taxon>
        <taxon>Enterobacteriaceae</taxon>
        <taxon>Shigella</taxon>
    </lineage>
</organism>
<accession>Q31YT5</accession>
<keyword id="KW-0067">ATP-binding</keyword>
<keyword id="KW-0418">Kinase</keyword>
<keyword id="KW-0441">Lipid A biosynthesis</keyword>
<keyword id="KW-0444">Lipid biosynthesis</keyword>
<keyword id="KW-0443">Lipid metabolism</keyword>
<keyword id="KW-0547">Nucleotide-binding</keyword>
<keyword id="KW-0808">Transferase</keyword>
<sequence length="328" mass="35639">MIEKIWSGESPLWRLLLPLSWLYGLVSGAIRLCYKLKLKRAWRAPVPVVVVGNLTAGGNGKTPVVVWLVEQLQQRGIRVGVVSRGYGSKAESYPLLLSADTTTAQAGDEPVLIYQRTDAPVAVSPVRSDAVKAILAQHPDVQIIVTDDGLQHYRLARDVEIVVIDGVRRFGNGWWLPAGPMRERAGRLKSVDAVIVNGGVPRSGEIPMHLLPGQAVNLRTGTRCDVAQLEHVVAMAGIGHPPRFFATLKMCGVQPEKCVPLADHQSLNHADVSASVSAEQTLVMTEKDAVKCRAFAEENWWYLPVDAQLSGDEPAKLLTQLTSLASGN</sequence>